<keyword id="KW-0963">Cytoplasm</keyword>
<keyword id="KW-0396">Initiation factor</keyword>
<keyword id="KW-0648">Protein biosynthesis</keyword>
<keyword id="KW-1185">Reference proteome</keyword>
<keyword id="KW-0694">RNA-binding</keyword>
<keyword id="KW-0699">rRNA-binding</keyword>
<dbReference type="EMBL" id="CP000655">
    <property type="protein sequence ID" value="ABP33805.1"/>
    <property type="molecule type" value="Genomic_DNA"/>
</dbReference>
<dbReference type="RefSeq" id="WP_011902430.1">
    <property type="nucleotide sequence ID" value="NC_009379.1"/>
</dbReference>
<dbReference type="SMR" id="A4SWE1"/>
<dbReference type="GeneID" id="31480942"/>
<dbReference type="KEGG" id="pnu:Pnuc_0587"/>
<dbReference type="eggNOG" id="COG0361">
    <property type="taxonomic scope" value="Bacteria"/>
</dbReference>
<dbReference type="HOGENOM" id="CLU_151267_4_1_4"/>
<dbReference type="Proteomes" id="UP000000231">
    <property type="component" value="Chromosome"/>
</dbReference>
<dbReference type="GO" id="GO:0005829">
    <property type="term" value="C:cytosol"/>
    <property type="evidence" value="ECO:0007669"/>
    <property type="project" value="TreeGrafter"/>
</dbReference>
<dbReference type="GO" id="GO:0043022">
    <property type="term" value="F:ribosome binding"/>
    <property type="evidence" value="ECO:0007669"/>
    <property type="project" value="UniProtKB-UniRule"/>
</dbReference>
<dbReference type="GO" id="GO:0019843">
    <property type="term" value="F:rRNA binding"/>
    <property type="evidence" value="ECO:0007669"/>
    <property type="project" value="UniProtKB-UniRule"/>
</dbReference>
<dbReference type="GO" id="GO:0003743">
    <property type="term" value="F:translation initiation factor activity"/>
    <property type="evidence" value="ECO:0007669"/>
    <property type="project" value="UniProtKB-UniRule"/>
</dbReference>
<dbReference type="CDD" id="cd04451">
    <property type="entry name" value="S1_IF1"/>
    <property type="match status" value="1"/>
</dbReference>
<dbReference type="FunFam" id="2.40.50.140:FF:000002">
    <property type="entry name" value="Translation initiation factor IF-1"/>
    <property type="match status" value="1"/>
</dbReference>
<dbReference type="Gene3D" id="2.40.50.140">
    <property type="entry name" value="Nucleic acid-binding proteins"/>
    <property type="match status" value="1"/>
</dbReference>
<dbReference type="HAMAP" id="MF_00075">
    <property type="entry name" value="IF_1"/>
    <property type="match status" value="1"/>
</dbReference>
<dbReference type="InterPro" id="IPR012340">
    <property type="entry name" value="NA-bd_OB-fold"/>
</dbReference>
<dbReference type="InterPro" id="IPR006196">
    <property type="entry name" value="RNA-binding_domain_S1_IF1"/>
</dbReference>
<dbReference type="InterPro" id="IPR004368">
    <property type="entry name" value="TIF_IF1"/>
</dbReference>
<dbReference type="NCBIfam" id="TIGR00008">
    <property type="entry name" value="infA"/>
    <property type="match status" value="1"/>
</dbReference>
<dbReference type="PANTHER" id="PTHR33370">
    <property type="entry name" value="TRANSLATION INITIATION FACTOR IF-1, CHLOROPLASTIC"/>
    <property type="match status" value="1"/>
</dbReference>
<dbReference type="PANTHER" id="PTHR33370:SF1">
    <property type="entry name" value="TRANSLATION INITIATION FACTOR IF-1, CHLOROPLASTIC"/>
    <property type="match status" value="1"/>
</dbReference>
<dbReference type="Pfam" id="PF01176">
    <property type="entry name" value="eIF-1a"/>
    <property type="match status" value="1"/>
</dbReference>
<dbReference type="SUPFAM" id="SSF50249">
    <property type="entry name" value="Nucleic acid-binding proteins"/>
    <property type="match status" value="1"/>
</dbReference>
<dbReference type="PROSITE" id="PS50832">
    <property type="entry name" value="S1_IF1_TYPE"/>
    <property type="match status" value="1"/>
</dbReference>
<accession>A4SWE1</accession>
<reference key="1">
    <citation type="journal article" date="2012" name="Stand. Genomic Sci.">
        <title>Complete genome sequence of Polynucleobacter necessarius subsp. asymbioticus type strain (QLW-P1DMWA-1(T)).</title>
        <authorList>
            <person name="Meincke L."/>
            <person name="Copeland A."/>
            <person name="Lapidus A."/>
            <person name="Lucas S."/>
            <person name="Berry K.W."/>
            <person name="Del Rio T.G."/>
            <person name="Hammon N."/>
            <person name="Dalin E."/>
            <person name="Tice H."/>
            <person name="Pitluck S."/>
            <person name="Richardson P."/>
            <person name="Bruce D."/>
            <person name="Goodwin L."/>
            <person name="Han C."/>
            <person name="Tapia R."/>
            <person name="Detter J.C."/>
            <person name="Schmutz J."/>
            <person name="Brettin T."/>
            <person name="Larimer F."/>
            <person name="Land M."/>
            <person name="Hauser L."/>
            <person name="Kyrpides N.C."/>
            <person name="Ivanova N."/>
            <person name="Goker M."/>
            <person name="Woyke T."/>
            <person name="Wu Q.L."/>
            <person name="Pockl M."/>
            <person name="Hahn M.W."/>
            <person name="Klenk H.P."/>
        </authorList>
    </citation>
    <scope>NUCLEOTIDE SEQUENCE [LARGE SCALE GENOMIC DNA]</scope>
    <source>
        <strain>DSM 18221 / CIP 109841 / QLW-P1DMWA-1</strain>
    </source>
</reference>
<protein>
    <recommendedName>
        <fullName evidence="1">Translation initiation factor IF-1 2</fullName>
    </recommendedName>
</protein>
<evidence type="ECO:0000255" key="1">
    <source>
        <dbReference type="HAMAP-Rule" id="MF_00075"/>
    </source>
</evidence>
<comment type="function">
    <text evidence="1">One of the essential components for the initiation of protein synthesis. Stabilizes the binding of IF-2 and IF-3 on the 30S subunit to which N-formylmethionyl-tRNA(fMet) subsequently binds. Helps modulate mRNA selection, yielding the 30S pre-initiation complex (PIC). Upon addition of the 50S ribosomal subunit IF-1, IF-2 and IF-3 are released leaving the mature 70S translation initiation complex.</text>
</comment>
<comment type="subunit">
    <text evidence="1">Component of the 30S ribosomal translation pre-initiation complex which assembles on the 30S ribosome in the order IF-2 and IF-3, IF-1 and N-formylmethionyl-tRNA(fMet); mRNA recruitment can occur at any time during PIC assembly.</text>
</comment>
<comment type="subcellular location">
    <subcellularLocation>
        <location evidence="1">Cytoplasm</location>
    </subcellularLocation>
</comment>
<comment type="similarity">
    <text evidence="1">Belongs to the IF-1 family.</text>
</comment>
<gene>
    <name evidence="1" type="primary">infA2</name>
    <name type="ordered locus">Pnuc_0587</name>
</gene>
<name>IF12_POLAQ</name>
<feature type="chain" id="PRO_0000338885" description="Translation initiation factor IF-1 2">
    <location>
        <begin position="1"/>
        <end position="86"/>
    </location>
</feature>
<feature type="domain" description="S1-like" evidence="1">
    <location>
        <begin position="1"/>
        <end position="72"/>
    </location>
</feature>
<organism>
    <name type="scientific">Polynucleobacter asymbioticus (strain DSM 18221 / CIP 109841 / QLW-P1DMWA-1)</name>
    <name type="common">Polynucleobacter necessarius subsp. asymbioticus</name>
    <dbReference type="NCBI Taxonomy" id="312153"/>
    <lineage>
        <taxon>Bacteria</taxon>
        <taxon>Pseudomonadati</taxon>
        <taxon>Pseudomonadota</taxon>
        <taxon>Betaproteobacteria</taxon>
        <taxon>Burkholderiales</taxon>
        <taxon>Burkholderiaceae</taxon>
        <taxon>Polynucleobacter</taxon>
    </lineage>
</organism>
<sequence>MAKEELLEMEGLVDEILPDSRYRITLDNGHKLIAYTAGRVKKNHIRILAGDKVSLEVSPYDLSKGRITFRHIDKKQSFAGAPYRRH</sequence>
<proteinExistence type="inferred from homology"/>